<comment type="function">
    <text evidence="1">Promotes RNA polymerase assembly. Latches the N- and C-terminal regions of the beta' subunit thereby facilitating its interaction with the beta and alpha subunits.</text>
</comment>
<comment type="catalytic activity">
    <reaction evidence="1">
        <text>RNA(n) + a ribonucleoside 5'-triphosphate = RNA(n+1) + diphosphate</text>
        <dbReference type="Rhea" id="RHEA:21248"/>
        <dbReference type="Rhea" id="RHEA-COMP:14527"/>
        <dbReference type="Rhea" id="RHEA-COMP:17342"/>
        <dbReference type="ChEBI" id="CHEBI:33019"/>
        <dbReference type="ChEBI" id="CHEBI:61557"/>
        <dbReference type="ChEBI" id="CHEBI:140395"/>
        <dbReference type="EC" id="2.7.7.6"/>
    </reaction>
</comment>
<comment type="subunit">
    <text evidence="1">The RNAP catalytic core consists of 2 alpha, 1 beta, 1 beta' and 1 omega subunit. When a sigma factor is associated with the core the holoenzyme is formed, which can initiate transcription.</text>
</comment>
<comment type="similarity">
    <text evidence="1">Belongs to the RNA polymerase subunit omega family.</text>
</comment>
<proteinExistence type="inferred from homology"/>
<name>RPOZ_BDEBA</name>
<feature type="chain" id="PRO_0000237437" description="DNA-directed RNA polymerase subunit omega">
    <location>
        <begin position="1"/>
        <end position="79"/>
    </location>
</feature>
<dbReference type="EC" id="2.7.7.6" evidence="1"/>
<dbReference type="EMBL" id="BX842650">
    <property type="protein sequence ID" value="CAE79447.1"/>
    <property type="molecule type" value="Genomic_DNA"/>
</dbReference>
<dbReference type="RefSeq" id="WP_011164049.1">
    <property type="nucleotide sequence ID" value="NC_005363.1"/>
</dbReference>
<dbReference type="SMR" id="Q6MMQ7"/>
<dbReference type="STRING" id="264462.Bd1569"/>
<dbReference type="GeneID" id="93012564"/>
<dbReference type="KEGG" id="bba:Bd1569"/>
<dbReference type="eggNOG" id="COG1758">
    <property type="taxonomic scope" value="Bacteria"/>
</dbReference>
<dbReference type="HOGENOM" id="CLU_125406_5_1_7"/>
<dbReference type="Proteomes" id="UP000008080">
    <property type="component" value="Chromosome"/>
</dbReference>
<dbReference type="GO" id="GO:0000428">
    <property type="term" value="C:DNA-directed RNA polymerase complex"/>
    <property type="evidence" value="ECO:0007669"/>
    <property type="project" value="UniProtKB-KW"/>
</dbReference>
<dbReference type="GO" id="GO:0003677">
    <property type="term" value="F:DNA binding"/>
    <property type="evidence" value="ECO:0007669"/>
    <property type="project" value="UniProtKB-UniRule"/>
</dbReference>
<dbReference type="GO" id="GO:0003899">
    <property type="term" value="F:DNA-directed RNA polymerase activity"/>
    <property type="evidence" value="ECO:0007669"/>
    <property type="project" value="UniProtKB-UniRule"/>
</dbReference>
<dbReference type="GO" id="GO:0006351">
    <property type="term" value="P:DNA-templated transcription"/>
    <property type="evidence" value="ECO:0007669"/>
    <property type="project" value="UniProtKB-UniRule"/>
</dbReference>
<dbReference type="Gene3D" id="3.90.940.10">
    <property type="match status" value="1"/>
</dbReference>
<dbReference type="HAMAP" id="MF_00366">
    <property type="entry name" value="RNApol_bact_RpoZ"/>
    <property type="match status" value="1"/>
</dbReference>
<dbReference type="InterPro" id="IPR003716">
    <property type="entry name" value="DNA-dir_RNA_pol_omega"/>
</dbReference>
<dbReference type="InterPro" id="IPR006110">
    <property type="entry name" value="Pol_omega/Rpo6/RPB6"/>
</dbReference>
<dbReference type="InterPro" id="IPR036161">
    <property type="entry name" value="RPB6/omega-like_sf"/>
</dbReference>
<dbReference type="NCBIfam" id="TIGR00690">
    <property type="entry name" value="rpoZ"/>
    <property type="match status" value="1"/>
</dbReference>
<dbReference type="PANTHER" id="PTHR34476">
    <property type="entry name" value="DNA-DIRECTED RNA POLYMERASE SUBUNIT OMEGA"/>
    <property type="match status" value="1"/>
</dbReference>
<dbReference type="PANTHER" id="PTHR34476:SF1">
    <property type="entry name" value="DNA-DIRECTED RNA POLYMERASE SUBUNIT OMEGA"/>
    <property type="match status" value="1"/>
</dbReference>
<dbReference type="Pfam" id="PF01192">
    <property type="entry name" value="RNA_pol_Rpb6"/>
    <property type="match status" value="1"/>
</dbReference>
<dbReference type="SMART" id="SM01409">
    <property type="entry name" value="RNA_pol_Rpb6"/>
    <property type="match status" value="1"/>
</dbReference>
<dbReference type="SUPFAM" id="SSF63562">
    <property type="entry name" value="RPB6/omega subunit-like"/>
    <property type="match status" value="1"/>
</dbReference>
<evidence type="ECO:0000255" key="1">
    <source>
        <dbReference type="HAMAP-Rule" id="MF_00366"/>
    </source>
</evidence>
<gene>
    <name evidence="1" type="primary">rpoZ</name>
    <name type="ordered locus">Bd1569</name>
</gene>
<organism>
    <name type="scientific">Bdellovibrio bacteriovorus (strain ATCC 15356 / DSM 50701 / NCIMB 9529 / HD100)</name>
    <dbReference type="NCBI Taxonomy" id="264462"/>
    <lineage>
        <taxon>Bacteria</taxon>
        <taxon>Pseudomonadati</taxon>
        <taxon>Bdellovibrionota</taxon>
        <taxon>Bdellovibrionia</taxon>
        <taxon>Bdellovibrionales</taxon>
        <taxon>Pseudobdellovibrionaceae</taxon>
        <taxon>Bdellovibrio</taxon>
    </lineage>
</organism>
<sequence length="79" mass="8796">MARVTVEDCLEKVPNRFALVLMVAKRAKQLLKGAEATVSTRSNKYIVSSLREVAMGNVGYQDSLDANEAIRQIEKDLNK</sequence>
<keyword id="KW-0240">DNA-directed RNA polymerase</keyword>
<keyword id="KW-0548">Nucleotidyltransferase</keyword>
<keyword id="KW-1185">Reference proteome</keyword>
<keyword id="KW-0804">Transcription</keyword>
<keyword id="KW-0808">Transferase</keyword>
<accession>Q6MMQ7</accession>
<reference key="1">
    <citation type="journal article" date="2004" name="Science">
        <title>A predator unmasked: life cycle of Bdellovibrio bacteriovorus from a genomic perspective.</title>
        <authorList>
            <person name="Rendulic S."/>
            <person name="Jagtap P."/>
            <person name="Rosinus A."/>
            <person name="Eppinger M."/>
            <person name="Baar C."/>
            <person name="Lanz C."/>
            <person name="Keller H."/>
            <person name="Lambert C."/>
            <person name="Evans K.J."/>
            <person name="Goesmann A."/>
            <person name="Meyer F."/>
            <person name="Sockett R.E."/>
            <person name="Schuster S.C."/>
        </authorList>
    </citation>
    <scope>NUCLEOTIDE SEQUENCE [LARGE SCALE GENOMIC DNA]</scope>
    <source>
        <strain>ATCC 15356 / DSM 50701 / NCIMB 9529 / HD100</strain>
    </source>
</reference>
<protein>
    <recommendedName>
        <fullName evidence="1">DNA-directed RNA polymerase subunit omega</fullName>
        <shortName evidence="1">RNAP omega subunit</shortName>
        <ecNumber evidence="1">2.7.7.6</ecNumber>
    </recommendedName>
    <alternativeName>
        <fullName evidence="1">RNA polymerase omega subunit</fullName>
    </alternativeName>
    <alternativeName>
        <fullName evidence="1">Transcriptase subunit omega</fullName>
    </alternativeName>
</protein>